<geneLocation type="plasmid">
    <name>pHLK1</name>
</geneLocation>
<keyword id="KW-0067">ATP-binding</keyword>
<keyword id="KW-0963">Cytoplasm</keyword>
<keyword id="KW-0378">Hydrolase</keyword>
<keyword id="KW-0547">Nucleotide-binding</keyword>
<keyword id="KW-0614">Plasmid</keyword>
<keyword id="KW-0645">Protease</keyword>
<keyword id="KW-1185">Reference proteome</keyword>
<keyword id="KW-0720">Serine protease</keyword>
<keyword id="KW-0346">Stress response</keyword>
<protein>
    <recommendedName>
        <fullName evidence="1">Lon protease</fullName>
        <ecNumber evidence="1">3.4.21.53</ecNumber>
    </recommendedName>
    <alternativeName>
        <fullName evidence="1">ATP-dependent protease La</fullName>
    </alternativeName>
</protein>
<name>LON_PHEZH</name>
<sequence>MNGEQSANGARTLPDDAVVVVPVSNVIFPGVVFPIVLDRPSAVAAAQQALREQHPLVLVLQQDVQAPDPGPQSLHRMGTLANVLRYVTGPDGAPHVACQGVERFEIDEWVEGFPFLVARGRRIPEPEAEGAAIEARFLHLRSQALEALQLLPQSPPGELVAAVEGASSPAALADLVAAYLDLQPPEKQQILETIDLEARLDKVSAFLAQRLEVLRLTSEIAQRTRQSLGERQRETLLREQMAAIQRELGEGEREELVELEAAIENAGMPEEVVQQARKELRRLARTPEAAAEYGMVRTYLEWLVELPWGVPEAAPIDLAEARRILDEDHFGLEKIKQRIIEHLAVRRLAPEGKAPILCFVGPPGVGKTSLGQSIARAMHRPFVRVSLGGVHDESEIRGHRRTYVGALPGNIIQAIRKAGRRDCVMMLDEIDKMSAGIHGDPSAALLEVLDPEQNVAFRDNYLAVPFDLSRVVFIATANMLDTIPGPLRDRMEVIQLSGYTAGEKRQIAERYLVRRQLEANGLTAEQVQIEPAALETLIARYTREAGVRSLEREIGRLLRHVAVRFAEGHTEPVRIGPTNLEPILGPPRVENEVAMRTSVPGVATGLAWTPVGGEILFIEATRTPGDGRLILTGQLGEVMRESAQTALSLVKSRAEALGVTPSLFKESDIHIHVPAGATPKDGPSAGVAMTMALISLLTDRTVRSDTAMTGEISLRGLVLPVGGIKEKVVAAATAGVRRVLLPARNRADERDIPEETRQTLELIWLERIEDAIEAGLDPRRGDVRQTQVRAAS</sequence>
<gene>
    <name evidence="1" type="primary">lon</name>
    <name type="ordered locus">PHZ_p0033</name>
</gene>
<proteinExistence type="inferred from homology"/>
<dbReference type="EC" id="3.4.21.53" evidence="1"/>
<dbReference type="EMBL" id="CP000748">
    <property type="protein sequence ID" value="ACG79976.1"/>
    <property type="molecule type" value="Genomic_DNA"/>
</dbReference>
<dbReference type="RefSeq" id="WP_012520276.1">
    <property type="nucleotide sequence ID" value="NC_011143.1"/>
</dbReference>
<dbReference type="SMR" id="B4RI01"/>
<dbReference type="KEGG" id="pzu:PHZ_p0033"/>
<dbReference type="eggNOG" id="COG0466">
    <property type="taxonomic scope" value="Bacteria"/>
</dbReference>
<dbReference type="HOGENOM" id="CLU_004109_4_3_5"/>
<dbReference type="OrthoDB" id="9803599at2"/>
<dbReference type="Proteomes" id="UP000001868">
    <property type="component" value="Plasmid pHLK1"/>
</dbReference>
<dbReference type="GO" id="GO:0005737">
    <property type="term" value="C:cytoplasm"/>
    <property type="evidence" value="ECO:0007669"/>
    <property type="project" value="UniProtKB-SubCell"/>
</dbReference>
<dbReference type="GO" id="GO:0005524">
    <property type="term" value="F:ATP binding"/>
    <property type="evidence" value="ECO:0007669"/>
    <property type="project" value="UniProtKB-UniRule"/>
</dbReference>
<dbReference type="GO" id="GO:0016887">
    <property type="term" value="F:ATP hydrolysis activity"/>
    <property type="evidence" value="ECO:0007669"/>
    <property type="project" value="UniProtKB-UniRule"/>
</dbReference>
<dbReference type="GO" id="GO:0004176">
    <property type="term" value="F:ATP-dependent peptidase activity"/>
    <property type="evidence" value="ECO:0007669"/>
    <property type="project" value="UniProtKB-UniRule"/>
</dbReference>
<dbReference type="GO" id="GO:0043565">
    <property type="term" value="F:sequence-specific DNA binding"/>
    <property type="evidence" value="ECO:0007669"/>
    <property type="project" value="UniProtKB-UniRule"/>
</dbReference>
<dbReference type="GO" id="GO:0004252">
    <property type="term" value="F:serine-type endopeptidase activity"/>
    <property type="evidence" value="ECO:0007669"/>
    <property type="project" value="UniProtKB-UniRule"/>
</dbReference>
<dbReference type="GO" id="GO:0034605">
    <property type="term" value="P:cellular response to heat"/>
    <property type="evidence" value="ECO:0007669"/>
    <property type="project" value="UniProtKB-UniRule"/>
</dbReference>
<dbReference type="GO" id="GO:0006515">
    <property type="term" value="P:protein quality control for misfolded or incompletely synthesized proteins"/>
    <property type="evidence" value="ECO:0007669"/>
    <property type="project" value="UniProtKB-UniRule"/>
</dbReference>
<dbReference type="CDD" id="cd19500">
    <property type="entry name" value="RecA-like_Lon"/>
    <property type="match status" value="1"/>
</dbReference>
<dbReference type="FunFam" id="1.20.5.5270:FF:000002">
    <property type="entry name" value="Lon protease homolog"/>
    <property type="match status" value="1"/>
</dbReference>
<dbReference type="FunFam" id="3.40.50.300:FF:000021">
    <property type="entry name" value="Lon protease homolog"/>
    <property type="match status" value="1"/>
</dbReference>
<dbReference type="Gene3D" id="1.10.8.60">
    <property type="match status" value="1"/>
</dbReference>
<dbReference type="Gene3D" id="1.20.5.5270">
    <property type="match status" value="1"/>
</dbReference>
<dbReference type="Gene3D" id="1.20.58.1480">
    <property type="match status" value="1"/>
</dbReference>
<dbReference type="Gene3D" id="3.30.230.10">
    <property type="match status" value="1"/>
</dbReference>
<dbReference type="Gene3D" id="2.30.130.40">
    <property type="entry name" value="LON domain-like"/>
    <property type="match status" value="1"/>
</dbReference>
<dbReference type="Gene3D" id="3.40.50.300">
    <property type="entry name" value="P-loop containing nucleotide triphosphate hydrolases"/>
    <property type="match status" value="1"/>
</dbReference>
<dbReference type="HAMAP" id="MF_01973">
    <property type="entry name" value="lon_bact"/>
    <property type="match status" value="1"/>
</dbReference>
<dbReference type="InterPro" id="IPR003593">
    <property type="entry name" value="AAA+_ATPase"/>
</dbReference>
<dbReference type="InterPro" id="IPR003959">
    <property type="entry name" value="ATPase_AAA_core"/>
</dbReference>
<dbReference type="InterPro" id="IPR027543">
    <property type="entry name" value="Lon_bac"/>
</dbReference>
<dbReference type="InterPro" id="IPR004815">
    <property type="entry name" value="Lon_bac/euk-typ"/>
</dbReference>
<dbReference type="InterPro" id="IPR054594">
    <property type="entry name" value="Lon_lid"/>
</dbReference>
<dbReference type="InterPro" id="IPR008269">
    <property type="entry name" value="Lon_proteolytic"/>
</dbReference>
<dbReference type="InterPro" id="IPR027065">
    <property type="entry name" value="Lon_Prtase"/>
</dbReference>
<dbReference type="InterPro" id="IPR003111">
    <property type="entry name" value="Lon_prtase_N"/>
</dbReference>
<dbReference type="InterPro" id="IPR046336">
    <property type="entry name" value="Lon_prtase_N_sf"/>
</dbReference>
<dbReference type="InterPro" id="IPR027417">
    <property type="entry name" value="P-loop_NTPase"/>
</dbReference>
<dbReference type="InterPro" id="IPR008268">
    <property type="entry name" value="Peptidase_S16_AS"/>
</dbReference>
<dbReference type="InterPro" id="IPR015947">
    <property type="entry name" value="PUA-like_sf"/>
</dbReference>
<dbReference type="InterPro" id="IPR020568">
    <property type="entry name" value="Ribosomal_Su5_D2-typ_SF"/>
</dbReference>
<dbReference type="InterPro" id="IPR014721">
    <property type="entry name" value="Ribsml_uS5_D2-typ_fold_subgr"/>
</dbReference>
<dbReference type="NCBIfam" id="TIGR00763">
    <property type="entry name" value="lon"/>
    <property type="match status" value="1"/>
</dbReference>
<dbReference type="PANTHER" id="PTHR10046">
    <property type="entry name" value="ATP DEPENDENT LON PROTEASE FAMILY MEMBER"/>
    <property type="match status" value="1"/>
</dbReference>
<dbReference type="Pfam" id="PF00004">
    <property type="entry name" value="AAA"/>
    <property type="match status" value="1"/>
</dbReference>
<dbReference type="Pfam" id="PF05362">
    <property type="entry name" value="Lon_C"/>
    <property type="match status" value="1"/>
</dbReference>
<dbReference type="Pfam" id="PF22667">
    <property type="entry name" value="Lon_lid"/>
    <property type="match status" value="1"/>
</dbReference>
<dbReference type="Pfam" id="PF02190">
    <property type="entry name" value="LON_substr_bdg"/>
    <property type="match status" value="1"/>
</dbReference>
<dbReference type="PIRSF" id="PIRSF001174">
    <property type="entry name" value="Lon_proteas"/>
    <property type="match status" value="1"/>
</dbReference>
<dbReference type="PRINTS" id="PR00830">
    <property type="entry name" value="ENDOLAPTASE"/>
</dbReference>
<dbReference type="SMART" id="SM00382">
    <property type="entry name" value="AAA"/>
    <property type="match status" value="1"/>
</dbReference>
<dbReference type="SMART" id="SM00464">
    <property type="entry name" value="LON"/>
    <property type="match status" value="1"/>
</dbReference>
<dbReference type="SUPFAM" id="SSF52540">
    <property type="entry name" value="P-loop containing nucleoside triphosphate hydrolases"/>
    <property type="match status" value="1"/>
</dbReference>
<dbReference type="SUPFAM" id="SSF88697">
    <property type="entry name" value="PUA domain-like"/>
    <property type="match status" value="1"/>
</dbReference>
<dbReference type="SUPFAM" id="SSF54211">
    <property type="entry name" value="Ribosomal protein S5 domain 2-like"/>
    <property type="match status" value="1"/>
</dbReference>
<dbReference type="PROSITE" id="PS51787">
    <property type="entry name" value="LON_N"/>
    <property type="match status" value="1"/>
</dbReference>
<dbReference type="PROSITE" id="PS51786">
    <property type="entry name" value="LON_PROTEOLYTIC"/>
    <property type="match status" value="1"/>
</dbReference>
<dbReference type="PROSITE" id="PS01046">
    <property type="entry name" value="LON_SER"/>
    <property type="match status" value="1"/>
</dbReference>
<accession>B4RI01</accession>
<feature type="chain" id="PRO_0000396592" description="Lon protease">
    <location>
        <begin position="1"/>
        <end position="792"/>
    </location>
</feature>
<feature type="domain" description="Lon N-terminal" evidence="3">
    <location>
        <begin position="16"/>
        <end position="211"/>
    </location>
</feature>
<feature type="domain" description="Lon proteolytic" evidence="2">
    <location>
        <begin position="597"/>
        <end position="778"/>
    </location>
</feature>
<feature type="active site" evidence="1">
    <location>
        <position position="684"/>
    </location>
</feature>
<feature type="active site" evidence="1">
    <location>
        <position position="727"/>
    </location>
</feature>
<feature type="binding site" evidence="1">
    <location>
        <begin position="361"/>
        <end position="368"/>
    </location>
    <ligand>
        <name>ATP</name>
        <dbReference type="ChEBI" id="CHEBI:30616"/>
    </ligand>
</feature>
<evidence type="ECO:0000255" key="1">
    <source>
        <dbReference type="HAMAP-Rule" id="MF_01973"/>
    </source>
</evidence>
<evidence type="ECO:0000255" key="2">
    <source>
        <dbReference type="PROSITE-ProRule" id="PRU01122"/>
    </source>
</evidence>
<evidence type="ECO:0000255" key="3">
    <source>
        <dbReference type="PROSITE-ProRule" id="PRU01123"/>
    </source>
</evidence>
<comment type="function">
    <text evidence="1">ATP-dependent serine protease that mediates the selective degradation of mutant and abnormal proteins as well as certain short-lived regulatory proteins. Required for cellular homeostasis and for survival from DNA damage and developmental changes induced by stress. Degrades polypeptides processively to yield small peptide fragments that are 5 to 10 amino acids long. Binds to DNA in a double-stranded, site-specific manner.</text>
</comment>
<comment type="catalytic activity">
    <reaction evidence="1">
        <text>Hydrolysis of proteins in presence of ATP.</text>
        <dbReference type="EC" id="3.4.21.53"/>
    </reaction>
</comment>
<comment type="subunit">
    <text evidence="1">Homohexamer. Organized in a ring with a central cavity.</text>
</comment>
<comment type="subcellular location">
    <subcellularLocation>
        <location evidence="1">Cytoplasm</location>
    </subcellularLocation>
</comment>
<comment type="induction">
    <text evidence="1">By heat shock.</text>
</comment>
<comment type="similarity">
    <text evidence="1">Belongs to the peptidase S16 family.</text>
</comment>
<organism>
    <name type="scientific">Phenylobacterium zucineum (strain HLK1)</name>
    <dbReference type="NCBI Taxonomy" id="450851"/>
    <lineage>
        <taxon>Bacteria</taxon>
        <taxon>Pseudomonadati</taxon>
        <taxon>Pseudomonadota</taxon>
        <taxon>Alphaproteobacteria</taxon>
        <taxon>Caulobacterales</taxon>
        <taxon>Caulobacteraceae</taxon>
        <taxon>Phenylobacterium</taxon>
    </lineage>
</organism>
<reference key="1">
    <citation type="journal article" date="2008" name="BMC Genomics">
        <title>Complete genome of Phenylobacterium zucineum - a novel facultative intracellular bacterium isolated from human erythroleukemia cell line K562.</title>
        <authorList>
            <person name="Luo Y."/>
            <person name="Xu X."/>
            <person name="Ding Z."/>
            <person name="Liu Z."/>
            <person name="Zhang B."/>
            <person name="Yan Z."/>
            <person name="Sun J."/>
            <person name="Hu S."/>
            <person name="Hu X."/>
        </authorList>
    </citation>
    <scope>NUCLEOTIDE SEQUENCE [LARGE SCALE GENOMIC DNA]</scope>
    <source>
        <strain>HLK1</strain>
    </source>
</reference>